<name>DEP1A_XENLA</name>
<sequence>MDSRIITPGPYRATKLWNEVTKHFRAAMPLRKHRQHFKAYGNCFTASEAIDWLHQLLKTNSNFGSEVTRQQTIQLLRKFLKNHVIEDLKGRWGTEELEDNNSLYRFPSTSPVKTIPSRPPLWKRSSLENVFKEKEHLFKMPQFSKKTPKRRASVDSKEEQENEDLMEDQRNDDDFPKQLSSKDIEDIWGNITMIHLQKILGLPSLEEVLNPAQIKPNYIRYNMTNTSKHGVVVLQDKTDDLPHWVLSAMKCLANWPKNNDMSQATYIGFERDVFRTVADYFLNLPEPLLTFEFYELFVNILVVCGYITVPNSHNGKHRFHNKTRDPAPAKKQHLNDEQFFKSTECLLLSLVRKVPNEEEDDVEHSFGEIARDNKDHIPRDVFAKKNHLYGSFSRRASRGTIGGSCQNLSTSRKETGVTRKVRVRSCSLEGIADSVSTDVRDCQSNILQPSSQKPEFSVVKERPITFGNQAESVTGLNASEHKLHYRTSDGGYSQTSEKLARSVSVGDCLESRTSKNAPVAEITIKPLKSKQTRMQKRFSPTDNEPTDLDFTVTKRLCQSTMELSHSSFPSTSSLLPPTTSPNSTGSESLLQPHLEKVAIEALQLCCLLLPPANRRKLQLLMRMISRMSQNVDMPRLHDAMGTRSLMIQTFSRCVLCCAEEVDLDELLASRLVSFLMDHHQDILQVPCYLQTAVQDHVQYLQRPRVKQGTVPEYYFCKQISAQEFEEQRLATSQAAIMELLENIVRDKALAVKDKKKKLKQFQKQYPDIYQSRFPTTESEAKLFGDKPTIKQPMLMLKKPKFKSLRY</sequence>
<organism>
    <name type="scientific">Xenopus laevis</name>
    <name type="common">African clawed frog</name>
    <dbReference type="NCBI Taxonomy" id="8355"/>
    <lineage>
        <taxon>Eukaryota</taxon>
        <taxon>Metazoa</taxon>
        <taxon>Chordata</taxon>
        <taxon>Craniata</taxon>
        <taxon>Vertebrata</taxon>
        <taxon>Euteleostomi</taxon>
        <taxon>Amphibia</taxon>
        <taxon>Batrachia</taxon>
        <taxon>Anura</taxon>
        <taxon>Pipoidea</taxon>
        <taxon>Pipidae</taxon>
        <taxon>Xenopodinae</taxon>
        <taxon>Xenopus</taxon>
        <taxon>Xenopus</taxon>
    </lineage>
</organism>
<feature type="chain" id="PRO_0000284789" description="DEP domain-containing protein 1A">
    <location>
        <begin position="1"/>
        <end position="806"/>
    </location>
</feature>
<feature type="domain" description="DEP" evidence="1">
    <location>
        <begin position="24"/>
        <end position="108"/>
    </location>
</feature>
<feature type="domain" description="Rho-GAP">
    <location>
        <begin position="279"/>
        <end position="319"/>
    </location>
</feature>
<feature type="region of interest" description="Disordered" evidence="2">
    <location>
        <begin position="142"/>
        <end position="177"/>
    </location>
</feature>
<feature type="region of interest" description="Disordered" evidence="2">
    <location>
        <begin position="564"/>
        <end position="588"/>
    </location>
</feature>
<feature type="compositionally biased region" description="Basic and acidic residues" evidence="2">
    <location>
        <begin position="167"/>
        <end position="177"/>
    </location>
</feature>
<protein>
    <recommendedName>
        <fullName>DEP domain-containing protein 1A</fullName>
    </recommendedName>
</protein>
<keyword id="KW-0343">GTPase activation</keyword>
<keyword id="KW-1185">Reference proteome</keyword>
<dbReference type="EMBL" id="BC072317">
    <property type="protein sequence ID" value="AAH72317.1"/>
    <property type="molecule type" value="mRNA"/>
</dbReference>
<dbReference type="SMR" id="Q6ING4"/>
<dbReference type="DNASU" id="443839"/>
<dbReference type="GeneID" id="443839"/>
<dbReference type="KEGG" id="xla:443839"/>
<dbReference type="AGR" id="Xenbase:XB-GENE-6465995"/>
<dbReference type="CTD" id="443839"/>
<dbReference type="Xenbase" id="XB-GENE-6465995">
    <property type="gene designation" value="depdc1.L"/>
</dbReference>
<dbReference type="OrthoDB" id="524326at2759"/>
<dbReference type="Proteomes" id="UP000186698">
    <property type="component" value="Chromosome 4L"/>
</dbReference>
<dbReference type="Bgee" id="443839">
    <property type="expression patterns" value="Expressed in blastula and 14 other cell types or tissues"/>
</dbReference>
<dbReference type="GO" id="GO:0005634">
    <property type="term" value="C:nucleus"/>
    <property type="evidence" value="ECO:0000318"/>
    <property type="project" value="GO_Central"/>
</dbReference>
<dbReference type="GO" id="GO:0017053">
    <property type="term" value="C:transcription repressor complex"/>
    <property type="evidence" value="ECO:0000318"/>
    <property type="project" value="GO_Central"/>
</dbReference>
<dbReference type="GO" id="GO:0005096">
    <property type="term" value="F:GTPase activator activity"/>
    <property type="evidence" value="ECO:0007669"/>
    <property type="project" value="UniProtKB-KW"/>
</dbReference>
<dbReference type="GO" id="GO:0035556">
    <property type="term" value="P:intracellular signal transduction"/>
    <property type="evidence" value="ECO:0007669"/>
    <property type="project" value="InterPro"/>
</dbReference>
<dbReference type="CDD" id="cd04447">
    <property type="entry name" value="DEP_BRCC3"/>
    <property type="match status" value="1"/>
</dbReference>
<dbReference type="CDD" id="cd04405">
    <property type="entry name" value="RhoGAP_BRCC3-like"/>
    <property type="match status" value="1"/>
</dbReference>
<dbReference type="FunFam" id="1.10.555.10:FF:000038">
    <property type="entry name" value="DEP domain-containing protein 1A isoform X1"/>
    <property type="match status" value="1"/>
</dbReference>
<dbReference type="FunFam" id="1.10.10.10:FF:000182">
    <property type="entry name" value="DEP domain-containing protein 1B isoform 1"/>
    <property type="match status" value="1"/>
</dbReference>
<dbReference type="Gene3D" id="1.10.555.10">
    <property type="entry name" value="Rho GTPase activation protein"/>
    <property type="match status" value="1"/>
</dbReference>
<dbReference type="Gene3D" id="1.10.10.10">
    <property type="entry name" value="Winged helix-like DNA-binding domain superfamily/Winged helix DNA-binding domain"/>
    <property type="match status" value="1"/>
</dbReference>
<dbReference type="InterPro" id="IPR000591">
    <property type="entry name" value="DEP_dom"/>
</dbReference>
<dbReference type="InterPro" id="IPR008936">
    <property type="entry name" value="Rho_GTPase_activation_prot"/>
</dbReference>
<dbReference type="InterPro" id="IPR036388">
    <property type="entry name" value="WH-like_DNA-bd_sf"/>
</dbReference>
<dbReference type="InterPro" id="IPR036390">
    <property type="entry name" value="WH_DNA-bd_sf"/>
</dbReference>
<dbReference type="PANTHER" id="PTHR16206">
    <property type="entry name" value="DEP DOMAIN-CONTAINING"/>
    <property type="match status" value="1"/>
</dbReference>
<dbReference type="PANTHER" id="PTHR16206:SF12">
    <property type="entry name" value="DEP DOMAIN-CONTAINING PROTEIN 1A"/>
    <property type="match status" value="1"/>
</dbReference>
<dbReference type="Pfam" id="PF00610">
    <property type="entry name" value="DEP"/>
    <property type="match status" value="1"/>
</dbReference>
<dbReference type="SMART" id="SM00049">
    <property type="entry name" value="DEP"/>
    <property type="match status" value="1"/>
</dbReference>
<dbReference type="SUPFAM" id="SSF48350">
    <property type="entry name" value="GTPase activation domain, GAP"/>
    <property type="match status" value="1"/>
</dbReference>
<dbReference type="SUPFAM" id="SSF46785">
    <property type="entry name" value="Winged helix' DNA-binding domain"/>
    <property type="match status" value="1"/>
</dbReference>
<dbReference type="PROSITE" id="PS50186">
    <property type="entry name" value="DEP"/>
    <property type="match status" value="1"/>
</dbReference>
<gene>
    <name type="primary">depdc1a</name>
</gene>
<reference key="1">
    <citation type="submission" date="2004-06" db="EMBL/GenBank/DDBJ databases">
        <authorList>
            <consortium name="NIH - Xenopus Gene Collection (XGC) project"/>
        </authorList>
    </citation>
    <scope>NUCLEOTIDE SEQUENCE [LARGE SCALE MRNA]</scope>
    <source>
        <tissue>Ovary</tissue>
    </source>
</reference>
<proteinExistence type="evidence at transcript level"/>
<accession>Q6ING4</accession>
<evidence type="ECO:0000255" key="1">
    <source>
        <dbReference type="PROSITE-ProRule" id="PRU00066"/>
    </source>
</evidence>
<evidence type="ECO:0000256" key="2">
    <source>
        <dbReference type="SAM" id="MobiDB-lite"/>
    </source>
</evidence>